<organism>
    <name type="scientific">Caenorhabditis elegans</name>
    <dbReference type="NCBI Taxonomy" id="6239"/>
    <lineage>
        <taxon>Eukaryota</taxon>
        <taxon>Metazoa</taxon>
        <taxon>Ecdysozoa</taxon>
        <taxon>Nematoda</taxon>
        <taxon>Chromadorea</taxon>
        <taxon>Rhabditida</taxon>
        <taxon>Rhabditina</taxon>
        <taxon>Rhabditomorpha</taxon>
        <taxon>Rhabditoidea</taxon>
        <taxon>Rhabditidae</taxon>
        <taxon>Peloderinae</taxon>
        <taxon>Caenorhabditis</taxon>
    </lineage>
</organism>
<reference key="1">
    <citation type="journal article" date="1994" name="Nature">
        <title>2.2 Mb of contiguous nucleotide sequence from chromosome III of C. elegans.</title>
        <authorList>
            <person name="Wilson R."/>
            <person name="Ainscough R."/>
            <person name="Anderson K."/>
            <person name="Baynes C."/>
            <person name="Berks M."/>
            <person name="Bonfield J."/>
            <person name="Burton J."/>
            <person name="Connell M."/>
            <person name="Copsey T."/>
            <person name="Cooper J."/>
            <person name="Coulson A."/>
            <person name="Craxton M."/>
            <person name="Dear S."/>
            <person name="Du Z."/>
            <person name="Durbin R."/>
            <person name="Favello A."/>
            <person name="Fraser A."/>
            <person name="Fulton L."/>
            <person name="Gardner A."/>
            <person name="Green P."/>
            <person name="Hawkins T."/>
            <person name="Hillier L."/>
            <person name="Jier M."/>
            <person name="Johnston L."/>
            <person name="Jones M."/>
            <person name="Kershaw J."/>
            <person name="Kirsten J."/>
            <person name="Laisster N."/>
            <person name="Latreille P."/>
            <person name="Lightning J."/>
            <person name="Lloyd C."/>
            <person name="Mortimore B."/>
            <person name="O'Callaghan M."/>
            <person name="Parsons J."/>
            <person name="Percy C."/>
            <person name="Rifken L."/>
            <person name="Roopra A."/>
            <person name="Saunders D."/>
            <person name="Shownkeen R."/>
            <person name="Sims M."/>
            <person name="Smaldon N."/>
            <person name="Smith A."/>
            <person name="Smith M."/>
            <person name="Sonnhammer E."/>
            <person name="Staden R."/>
            <person name="Sulston J."/>
            <person name="Thierry-Mieg J."/>
            <person name="Thomas K."/>
            <person name="Vaudin M."/>
            <person name="Vaughan K."/>
            <person name="Waterston R."/>
            <person name="Watson A."/>
            <person name="Weinstock L."/>
            <person name="Wilkinson-Sproat J."/>
            <person name="Wohldman P."/>
        </authorList>
    </citation>
    <scope>NUCLEOTIDE SEQUENCE [LARGE SCALE GENOMIC DNA]</scope>
    <source>
        <strain>Bristol N2</strain>
    </source>
</reference>
<reference key="2">
    <citation type="journal article" date="1998" name="Science">
        <title>Genome sequence of the nematode C. elegans: a platform for investigating biology.</title>
        <authorList>
            <consortium name="The C. elegans sequencing consortium"/>
        </authorList>
    </citation>
    <scope>NUCLEOTIDE SEQUENCE [LARGE SCALE GENOMIC DNA]</scope>
    <scope>ALTERNATIVE SPLICING</scope>
    <source>
        <strain>Bristol N2</strain>
    </source>
</reference>
<reference key="3">
    <citation type="journal article" date="2002" name="Curr. Biol.">
        <title>The GTPase Ran regulates chromosome positioning and nuclear envelope assembly in vivo.</title>
        <authorList>
            <person name="Bamba C."/>
            <person name="Bobinnec Y."/>
            <person name="Fukuda M."/>
            <person name="Nishida E."/>
        </authorList>
    </citation>
    <scope>FUNCTION</scope>
    <scope>SUBCELLULAR LOCATION</scope>
</reference>
<sequence length="960" mass="105653">MLPRLFLTILPVCSPSISNKTSKKFRDAHANHVFLFEMDLNNTLSFFGKQLKLDTEEEISKVIDQIRKHLNLEVLDFRGNTLSVLAGKLIAESLKTRRELKECIWSDMFTGRLKDEIPLVLDALGEALTASGCRLTTLDLSDNAFGAGLSTSLYNFLQSPALYSLENLILNNNGLGLAGKTVGKALCSLIDASKKAGTPLKLKKFVCGRNRLEVESTIALSDAFIKLGTLEEIRLPQNGIRDDGIIALAEAFRMNKKLRIIDINDNFCCPEGAIQISEVLSDLQFIEVLDLGDCVCDDPGVLAIIAELDKINRDCLKKVVLSGNNITSDVIDEIGACFNSPKMCHVKVDISVNMFGKDFDSAKARHGKGNIDFGRRGDDELLSSDEEEEQGAEDASMEEDAFNTSRETVIDRSNLHEASADEMMNDLMNKGFGCMKIEDNQQNSNGNGMVSFLDKSLKLDTAESAEPVVKVIAAASSMKALELRGNTLGIAAGNVIAKALESHPELERCLWSDLFTGRLKNEIPPILEALGKAMMTAGCKIKELDLSDNAFGPIGADALKDLLESPSSFSLEVLKLNNNGLGIGGKQIAKSLTECLRKSIAVGGENRLRLKTFIAGRNRLENPGAHALAATFKALETVEWFDVRQNGIHEEGIRALVAALKHNRNLRYLWLEDNTVLPKGAKALAKTLESWPKLEVLNLSDCLIRDAGCNYIIDHLNPQHHRHLKNVYLCGNELTPPVAKLLIQKWSKFDGLTPKPVLHIHTNSFGDEFSDVAGMAPENVNVGDEDDDLGSLDGDQEEYNSKSSDSEDADLDDDDEDDDEEAEIQIIDNGESQLKLAMDRIDRLDIDFESRFQEDTARVILQLSAPLKSCKMSEPALQRAIEVAENIVRRVESVKRNPIPATTQLVNNIVAQCAGTGVKAETDWGYGADPQVISRLFSELVARGHFKLELALLQRFFPSQ</sequence>
<name>RGP2_CAEEL</name>
<proteinExistence type="predicted"/>
<evidence type="ECO:0000256" key="1">
    <source>
        <dbReference type="SAM" id="MobiDB-lite"/>
    </source>
</evidence>
<evidence type="ECO:0000269" key="2">
    <source>
    </source>
</evidence>
<evidence type="ECO:0000305" key="3"/>
<keyword id="KW-0025">Alternative splicing</keyword>
<keyword id="KW-0131">Cell cycle</keyword>
<keyword id="KW-0132">Cell division</keyword>
<keyword id="KW-0343">GTPase activation</keyword>
<keyword id="KW-0433">Leucine-rich repeat</keyword>
<keyword id="KW-0498">Mitosis</keyword>
<keyword id="KW-0539">Nucleus</keyword>
<keyword id="KW-1185">Reference proteome</keyword>
<keyword id="KW-0677">Repeat</keyword>
<comment type="function">
    <text evidence="2">GTPase system comprising ran-1, ran-2 and ran-3 is essential in nucleocytoplasmic trafficking. Ran-2 is a GTPase activator for the nuclear RAS-related regulatory protein Ran, converting it to the putatively inactive GDP-bound state. Required for correct chromosome alignment and segregation on the metaphase plate.</text>
</comment>
<comment type="subcellular location">
    <subcellularLocation>
        <location evidence="2">Nucleus</location>
    </subcellularLocation>
</comment>
<comment type="alternative products">
    <event type="alternative splicing"/>
    <isoform>
        <id>P34342-1</id>
        <name>a</name>
        <sequence type="displayed"/>
    </isoform>
    <isoform>
        <id>P34342-2</id>
        <name>b</name>
        <sequence type="described" ref="VSP_014340 VSP_008709"/>
    </isoform>
</comment>
<protein>
    <recommendedName>
        <fullName>Ran GTPase-activating protein 2</fullName>
    </recommendedName>
    <alternativeName>
        <fullName>Ran nuclear import/export-related protein 2</fullName>
    </alternativeName>
    <alternativeName>
        <fullName>RanGAP</fullName>
    </alternativeName>
</protein>
<dbReference type="EMBL" id="FO080706">
    <property type="protein sequence ID" value="CCD66004.1"/>
    <property type="molecule type" value="Genomic_DNA"/>
</dbReference>
<dbReference type="EMBL" id="FO080706">
    <property type="protein sequence ID" value="CCD66005.1"/>
    <property type="molecule type" value="Genomic_DNA"/>
</dbReference>
<dbReference type="PIR" id="S44770">
    <property type="entry name" value="S44770"/>
</dbReference>
<dbReference type="RefSeq" id="NP_741232.1">
    <molecule id="P34342-2"/>
    <property type="nucleotide sequence ID" value="NM_171198.8"/>
</dbReference>
<dbReference type="RefSeq" id="NP_741233.2">
    <molecule id="P34342-1"/>
    <property type="nucleotide sequence ID" value="NM_171884.5"/>
</dbReference>
<dbReference type="SMR" id="P34342"/>
<dbReference type="BioGRID" id="41322">
    <property type="interactions" value="10"/>
</dbReference>
<dbReference type="FunCoup" id="P34342">
    <property type="interactions" value="239"/>
</dbReference>
<dbReference type="IntAct" id="P34342">
    <property type="interactions" value="3"/>
</dbReference>
<dbReference type="STRING" id="6239.C29E4.3a.1"/>
<dbReference type="iPTMnet" id="P34342"/>
<dbReference type="PaxDb" id="6239-C29E4.3a"/>
<dbReference type="PeptideAtlas" id="P34342"/>
<dbReference type="EnsemblMetazoa" id="C29E4.3a.1">
    <molecule id="P34342-1"/>
    <property type="protein sequence ID" value="C29E4.3a.1"/>
    <property type="gene ID" value="WBGene00004303"/>
</dbReference>
<dbReference type="EnsemblMetazoa" id="C29E4.3b.1">
    <molecule id="P34342-2"/>
    <property type="protein sequence ID" value="C29E4.3b.1"/>
    <property type="gene ID" value="WBGene00004303"/>
</dbReference>
<dbReference type="EnsemblMetazoa" id="C29E4.3b.2">
    <molecule id="P34342-2"/>
    <property type="protein sequence ID" value="C29E4.3b.2"/>
    <property type="gene ID" value="WBGene00004303"/>
</dbReference>
<dbReference type="GeneID" id="176115"/>
<dbReference type="KEGG" id="cel:CELE_C29E4.3"/>
<dbReference type="UCSC" id="C29E4.3a">
    <molecule id="P34342-1"/>
    <property type="organism name" value="c. elegans"/>
</dbReference>
<dbReference type="AGR" id="WB:WBGene00004303"/>
<dbReference type="CTD" id="176115"/>
<dbReference type="WormBase" id="C29E4.3a">
    <molecule id="P34342-1"/>
    <property type="protein sequence ID" value="CE37483"/>
    <property type="gene ID" value="WBGene00004303"/>
    <property type="gene designation" value="ran-2"/>
</dbReference>
<dbReference type="WormBase" id="C29E4.3b">
    <molecule id="P34342-2"/>
    <property type="protein sequence ID" value="CE30621"/>
    <property type="gene ID" value="WBGene00004303"/>
    <property type="gene designation" value="ran-2"/>
</dbReference>
<dbReference type="eggNOG" id="KOG1909">
    <property type="taxonomic scope" value="Eukaryota"/>
</dbReference>
<dbReference type="GeneTree" id="ENSGT00440000039203"/>
<dbReference type="InParanoid" id="P34342"/>
<dbReference type="OMA" id="IANPRCV"/>
<dbReference type="OrthoDB" id="184583at2759"/>
<dbReference type="PhylomeDB" id="P34342"/>
<dbReference type="Reactome" id="R-CEL-9615933">
    <property type="pathway name" value="Postmitotic nuclear pore complex (NPC) reformation"/>
</dbReference>
<dbReference type="Reactome" id="R-CEL-9793242">
    <property type="pathway name" value="SUMOylation of nuclear envelope proteins"/>
</dbReference>
<dbReference type="PRO" id="PR:P34342"/>
<dbReference type="Proteomes" id="UP000001940">
    <property type="component" value="Chromosome III"/>
</dbReference>
<dbReference type="Bgee" id="WBGene00004303">
    <property type="expression patterns" value="Expressed in adult organism and 4 other cell types or tissues"/>
</dbReference>
<dbReference type="GO" id="GO:0005829">
    <property type="term" value="C:cytosol"/>
    <property type="evidence" value="ECO:0000318"/>
    <property type="project" value="GO_Central"/>
</dbReference>
<dbReference type="GO" id="GO:0005634">
    <property type="term" value="C:nucleus"/>
    <property type="evidence" value="ECO:0000318"/>
    <property type="project" value="GO_Central"/>
</dbReference>
<dbReference type="GO" id="GO:0048471">
    <property type="term" value="C:perinuclear region of cytoplasm"/>
    <property type="evidence" value="ECO:0000318"/>
    <property type="project" value="GO_Central"/>
</dbReference>
<dbReference type="GO" id="GO:0005096">
    <property type="term" value="F:GTPase activator activity"/>
    <property type="evidence" value="ECO:0000318"/>
    <property type="project" value="GO_Central"/>
</dbReference>
<dbReference type="GO" id="GO:0031267">
    <property type="term" value="F:small GTPase binding"/>
    <property type="evidence" value="ECO:0000318"/>
    <property type="project" value="GO_Central"/>
</dbReference>
<dbReference type="GO" id="GO:0051301">
    <property type="term" value="P:cell division"/>
    <property type="evidence" value="ECO:0007669"/>
    <property type="project" value="UniProtKB-KW"/>
</dbReference>
<dbReference type="GO" id="GO:0009792">
    <property type="term" value="P:embryo development ending in birth or egg hatching"/>
    <property type="evidence" value="ECO:0000315"/>
    <property type="project" value="WormBase"/>
</dbReference>
<dbReference type="GO" id="GO:0051168">
    <property type="term" value="P:nuclear export"/>
    <property type="evidence" value="ECO:0000318"/>
    <property type="project" value="GO_Central"/>
</dbReference>
<dbReference type="CDD" id="cd00116">
    <property type="entry name" value="LRR_RI"/>
    <property type="match status" value="2"/>
</dbReference>
<dbReference type="FunFam" id="3.80.10.10:FF:000142">
    <property type="entry name" value="Ran GTPase activating protein 1"/>
    <property type="match status" value="2"/>
</dbReference>
<dbReference type="Gene3D" id="3.80.10.10">
    <property type="entry name" value="Ribonuclease Inhibitor"/>
    <property type="match status" value="2"/>
</dbReference>
<dbReference type="InterPro" id="IPR001611">
    <property type="entry name" value="Leu-rich_rpt"/>
</dbReference>
<dbReference type="InterPro" id="IPR032675">
    <property type="entry name" value="LRR_dom_sf"/>
</dbReference>
<dbReference type="InterPro" id="IPR027038">
    <property type="entry name" value="RanGap"/>
</dbReference>
<dbReference type="PANTHER" id="PTHR24113">
    <property type="entry name" value="RAN GTPASE-ACTIVATING PROTEIN 1"/>
    <property type="match status" value="1"/>
</dbReference>
<dbReference type="PANTHER" id="PTHR24113:SF12">
    <property type="entry name" value="RAN GTPASE-ACTIVATING PROTEIN 1"/>
    <property type="match status" value="1"/>
</dbReference>
<dbReference type="Pfam" id="PF13516">
    <property type="entry name" value="LRR_6"/>
    <property type="match status" value="2"/>
</dbReference>
<dbReference type="SMART" id="SM00368">
    <property type="entry name" value="LRR_RI"/>
    <property type="match status" value="13"/>
</dbReference>
<dbReference type="SUPFAM" id="SSF52047">
    <property type="entry name" value="RNI-like"/>
    <property type="match status" value="2"/>
</dbReference>
<gene>
    <name type="primary">ran-2</name>
    <name type="ORF">C29E4.3</name>
</gene>
<accession>P34342</accession>
<accession>Q8MYR0</accession>
<accession>Q8TA79</accession>
<feature type="chain" id="PRO_0000097320" description="Ran GTPase-activating protein 2">
    <location>
        <begin position="1"/>
        <end position="960"/>
    </location>
</feature>
<feature type="repeat" description="LRR 1">
    <location>
        <begin position="69"/>
        <end position="92"/>
    </location>
</feature>
<feature type="repeat" description="LRR 2">
    <location>
        <begin position="132"/>
        <end position="156"/>
    </location>
</feature>
<feature type="repeat" description="LRR 3">
    <location>
        <begin position="162"/>
        <end position="185"/>
    </location>
</feature>
<feature type="repeat" description="LRR 4">
    <location>
        <begin position="227"/>
        <end position="254"/>
    </location>
</feature>
<feature type="repeat" description="LRR 5">
    <location>
        <begin position="313"/>
        <end position="340"/>
    </location>
</feature>
<feature type="repeat" description="LRR 6">
    <location>
        <begin position="475"/>
        <end position="498"/>
    </location>
</feature>
<feature type="repeat" description="LRR 7">
    <location>
        <begin position="538"/>
        <end position="561"/>
    </location>
</feature>
<feature type="repeat" description="LRR 8">
    <location>
        <begin position="568"/>
        <end position="595"/>
    </location>
</feature>
<feature type="repeat" description="LRR 9">
    <location>
        <begin position="663"/>
        <end position="685"/>
    </location>
</feature>
<feature type="region of interest" description="Disordered" evidence="1">
    <location>
        <begin position="370"/>
        <end position="408"/>
    </location>
</feature>
<feature type="region of interest" description="Disordered" evidence="1">
    <location>
        <begin position="777"/>
        <end position="819"/>
    </location>
</feature>
<feature type="compositionally biased region" description="Acidic residues" evidence="1">
    <location>
        <begin position="380"/>
        <end position="401"/>
    </location>
</feature>
<feature type="compositionally biased region" description="Acidic residues" evidence="1">
    <location>
        <begin position="783"/>
        <end position="798"/>
    </location>
</feature>
<feature type="compositionally biased region" description="Acidic residues" evidence="1">
    <location>
        <begin position="806"/>
        <end position="819"/>
    </location>
</feature>
<feature type="splice variant" id="VSP_014340" description="In isoform b." evidence="3">
    <location>
        <begin position="1"/>
        <end position="37"/>
    </location>
</feature>
<feature type="splice variant" id="VSP_008709" description="In isoform b." evidence="3">
    <original>K</original>
    <variation>KTLQ</variation>
    <location>
        <position position="919"/>
    </location>
</feature>